<feature type="signal peptide" evidence="2">
    <location>
        <begin position="1"/>
        <end position="21"/>
    </location>
</feature>
<feature type="chain" id="PRO_0000301790" description="Nitrogen permease regulator 3">
    <location>
        <begin position="22"/>
        <end position="940"/>
    </location>
</feature>
<feature type="region of interest" description="Disordered" evidence="3">
    <location>
        <begin position="37"/>
        <end position="155"/>
    </location>
</feature>
<feature type="region of interest" description="Disordered" evidence="3">
    <location>
        <begin position="317"/>
        <end position="387"/>
    </location>
</feature>
<feature type="region of interest" description="Disordered" evidence="3">
    <location>
        <begin position="812"/>
        <end position="848"/>
    </location>
</feature>
<feature type="compositionally biased region" description="Basic and acidic residues" evidence="3">
    <location>
        <begin position="37"/>
        <end position="52"/>
    </location>
</feature>
<feature type="compositionally biased region" description="Low complexity" evidence="3">
    <location>
        <begin position="61"/>
        <end position="72"/>
    </location>
</feature>
<feature type="compositionally biased region" description="Acidic residues" evidence="3">
    <location>
        <begin position="75"/>
        <end position="84"/>
    </location>
</feature>
<feature type="compositionally biased region" description="Low complexity" evidence="3">
    <location>
        <begin position="123"/>
        <end position="133"/>
    </location>
</feature>
<feature type="compositionally biased region" description="Polar residues" evidence="3">
    <location>
        <begin position="324"/>
        <end position="336"/>
    </location>
</feature>
<feature type="compositionally biased region" description="Polar residues" evidence="3">
    <location>
        <begin position="355"/>
        <end position="378"/>
    </location>
</feature>
<proteinExistence type="inferred from homology"/>
<accession>Q750J0</accession>
<organism>
    <name type="scientific">Eremothecium gossypii (strain ATCC 10895 / CBS 109.51 / FGSC 9923 / NRRL Y-1056)</name>
    <name type="common">Yeast</name>
    <name type="synonym">Ashbya gossypii</name>
    <dbReference type="NCBI Taxonomy" id="284811"/>
    <lineage>
        <taxon>Eukaryota</taxon>
        <taxon>Fungi</taxon>
        <taxon>Dikarya</taxon>
        <taxon>Ascomycota</taxon>
        <taxon>Saccharomycotina</taxon>
        <taxon>Saccharomycetes</taxon>
        <taxon>Saccharomycetales</taxon>
        <taxon>Saccharomycetaceae</taxon>
        <taxon>Eremothecium</taxon>
    </lineage>
</organism>
<name>NPR3_EREGS</name>
<reference key="1">
    <citation type="journal article" date="2004" name="Science">
        <title>The Ashbya gossypii genome as a tool for mapping the ancient Saccharomyces cerevisiae genome.</title>
        <authorList>
            <person name="Dietrich F.S."/>
            <person name="Voegeli S."/>
            <person name="Brachat S."/>
            <person name="Lerch A."/>
            <person name="Gates K."/>
            <person name="Steiner S."/>
            <person name="Mohr C."/>
            <person name="Poehlmann R."/>
            <person name="Luedi P."/>
            <person name="Choi S."/>
            <person name="Wing R.A."/>
            <person name="Flavier A."/>
            <person name="Gaffney T.D."/>
            <person name="Philippsen P."/>
        </authorList>
    </citation>
    <scope>NUCLEOTIDE SEQUENCE [LARGE SCALE GENOMIC DNA]</scope>
    <source>
        <strain>ATCC 10895 / CBS 109.51 / FGSC 9923 / NRRL Y-1056</strain>
    </source>
</reference>
<reference key="2">
    <citation type="journal article" date="2013" name="G3 (Bethesda)">
        <title>Genomes of Ashbya fungi isolated from insects reveal four mating-type loci, numerous translocations, lack of transposons, and distinct gene duplications.</title>
        <authorList>
            <person name="Dietrich F.S."/>
            <person name="Voegeli S."/>
            <person name="Kuo S."/>
            <person name="Philippsen P."/>
        </authorList>
    </citation>
    <scope>GENOME REANNOTATION</scope>
    <scope>SEQUENCE REVISION TO 589</scope>
    <source>
        <strain>ATCC 10895 / CBS 109.51 / FGSC 9923 / NRRL Y-1056</strain>
    </source>
</reference>
<evidence type="ECO:0000250" key="1"/>
<evidence type="ECO:0000255" key="2"/>
<evidence type="ECO:0000256" key="3">
    <source>
        <dbReference type="SAM" id="MobiDB-lite"/>
    </source>
</evidence>
<evidence type="ECO:0000305" key="4"/>
<dbReference type="EMBL" id="AE016820">
    <property type="protein sequence ID" value="AAS54451.2"/>
    <property type="status" value="ALT_INIT"/>
    <property type="molecule type" value="Genomic_DNA"/>
</dbReference>
<dbReference type="RefSeq" id="NP_986627.2">
    <property type="nucleotide sequence ID" value="NM_211689.2"/>
</dbReference>
<dbReference type="SMR" id="Q750J0"/>
<dbReference type="FunCoup" id="Q750J0">
    <property type="interactions" value="132"/>
</dbReference>
<dbReference type="STRING" id="284811.Q750J0"/>
<dbReference type="GeneID" id="4622926"/>
<dbReference type="KEGG" id="ago:AGOS_AGL039W"/>
<dbReference type="eggNOG" id="ENOG502QW35">
    <property type="taxonomic scope" value="Eukaryota"/>
</dbReference>
<dbReference type="InParanoid" id="Q750J0"/>
<dbReference type="OrthoDB" id="18648at2759"/>
<dbReference type="Proteomes" id="UP000000591">
    <property type="component" value="Chromosome VII"/>
</dbReference>
<dbReference type="GO" id="GO:1990130">
    <property type="term" value="C:GATOR1 complex"/>
    <property type="evidence" value="ECO:0000318"/>
    <property type="project" value="GO_Central"/>
</dbReference>
<dbReference type="GO" id="GO:0034198">
    <property type="term" value="P:cellular response to amino acid starvation"/>
    <property type="evidence" value="ECO:0000318"/>
    <property type="project" value="GO_Central"/>
</dbReference>
<dbReference type="GO" id="GO:0051321">
    <property type="term" value="P:meiotic cell cycle"/>
    <property type="evidence" value="ECO:0007669"/>
    <property type="project" value="UniProtKB-KW"/>
</dbReference>
<dbReference type="GO" id="GO:1904262">
    <property type="term" value="P:negative regulation of TORC1 signaling"/>
    <property type="evidence" value="ECO:0000318"/>
    <property type="project" value="GO_Central"/>
</dbReference>
<dbReference type="GO" id="GO:0010508">
    <property type="term" value="P:positive regulation of autophagy"/>
    <property type="evidence" value="ECO:0000318"/>
    <property type="project" value="GO_Central"/>
</dbReference>
<dbReference type="InterPro" id="IPR056603">
    <property type="entry name" value="HTH_NPRL3"/>
</dbReference>
<dbReference type="InterPro" id="IPR005365">
    <property type="entry name" value="Npr3"/>
</dbReference>
<dbReference type="PANTHER" id="PTHR13153">
    <property type="entry name" value="CGTHBA PROTEIN -14 GENE PROTEIN"/>
    <property type="match status" value="1"/>
</dbReference>
<dbReference type="PANTHER" id="PTHR13153:SF5">
    <property type="entry name" value="GATOR COMPLEX PROTEIN NPRL3"/>
    <property type="match status" value="1"/>
</dbReference>
<dbReference type="Pfam" id="PF24064">
    <property type="entry name" value="HTH_NPRL3"/>
    <property type="match status" value="1"/>
</dbReference>
<dbReference type="Pfam" id="PF03666">
    <property type="entry name" value="NPR3"/>
    <property type="match status" value="1"/>
</dbReference>
<protein>
    <recommendedName>
        <fullName>Nitrogen permease regulator 3</fullName>
    </recommendedName>
    <alternativeName>
        <fullName>Required for meiotic nuclear division protein 11</fullName>
    </alternativeName>
</protein>
<sequence length="940" mass="104770">MYTNLPKACLTGIVLTISTHSGPQVVYHYPPVKQPVEARRGRKVDSRNERVRSWQAGRMPSAASGAVDAVGEGVDGLEEESSESELDRSSGLSESEVSTDWADYSMSSSDSESEMREDGGGESSAVGGSSAAEGGEESLAEGADSSIAWPGPSESYNQLLESQSMVGSSANVAAASTKPKSIKSRHSQISANKLFQYLTNTSDADSRRQSVFSKLTGNEDSETIRLTDSVNLLDLESLLEDLEPGLADVDISELLDVEVFQPGRFQDVSKIFNFDAEFVAELCSPPKEMCNTRFELTVDDLCFLGLPIHVDESGRWRKQKVKRQQTNTRSKRSSSGGKPDAGSRTSVGLPHGTQERQPSTDQSGSGAPYLAQSSSESGQLRDPEQSDDVEDLQKAVHMFHVCFIMNPQLVEYNERIDDMYHYIVTRLSLILRYIQDKKGYVVRECAKILKTRDRILKKSLKLKKSHGQALQGRYLYECILKSSSLARALTKCFNSIINNEIVTLDIDNHKVISLQIPIKNEFSSLPDLKINPVLRGSYLTSLLNDSFLKQPVDFAAGSMMPGGDVMHDDNDVLDYALLLLDDTPKIIKDLEFSSFGSDLANVIMINLVKNLKPTVSLRSYLPLVSNLLEANLSLSARAAGSRHAASNAADSHSTPLQHSMIRSIVLHLVYWRYARIILPLSSKNTYIVSPLAPIRGTAADDFENTDMVKQGCKALIYQHQDLFHEKFPTLPTLPSFLSSISTCKPRSFGHLIPSKDHNLLYLSVLAWLIRYGYLTQLLTFVWLRVDRRIKIAVDEDLEREGVRTWNSIVKKEHRQNPHDNVAAPTREPASSAIDETASSSEHGDANISDGQESLDDYLFKESDYTIILEPKTATALEKRWLFKCIENQPTEMQLLFRKVIKYFNGKTPLELVEIKENIPKQELKKLIACLDKYVVELKHW</sequence>
<comment type="function">
    <text evidence="1">Mediates inactivation of the TORC1 complex in response to amino acid starvation. Required for meiotic nuclear division (By similarity).</text>
</comment>
<comment type="similarity">
    <text evidence="4">Belongs to the NPR3 family.</text>
</comment>
<comment type="sequence caution" evidence="4">
    <conflict type="erroneous initiation">
        <sequence resource="EMBL-CDS" id="AAS54451"/>
    </conflict>
    <text>Extended N-terminus.</text>
</comment>
<keyword id="KW-0469">Meiosis</keyword>
<keyword id="KW-1185">Reference proteome</keyword>
<keyword id="KW-0732">Signal</keyword>
<gene>
    <name type="primary">NPR3</name>
    <name type="synonym">RMD11</name>
    <name type="ordered locus">AGL039W</name>
</gene>